<protein>
    <recommendedName>
        <fullName>Bowman-Birk type proteinase inhibitor 3</fullName>
    </recommendedName>
    <alternativeName>
        <fullName evidence="4">LSI-3</fullName>
    </alternativeName>
</protein>
<sequence>GDDVKSACCDTCLCTKSNPPTCRCVDVGET</sequence>
<keyword id="KW-0903">Direct protein sequencing</keyword>
<keyword id="KW-1015">Disulfide bond</keyword>
<keyword id="KW-0646">Protease inhibitor</keyword>
<keyword id="KW-0722">Serine protease inhibitor</keyword>
<organism>
    <name type="scientific">Lathyrus sativus</name>
    <name type="common">White vetchling</name>
    <dbReference type="NCBI Taxonomy" id="3860"/>
    <lineage>
        <taxon>Eukaryota</taxon>
        <taxon>Viridiplantae</taxon>
        <taxon>Streptophyta</taxon>
        <taxon>Embryophyta</taxon>
        <taxon>Tracheophyta</taxon>
        <taxon>Spermatophyta</taxon>
        <taxon>Magnoliopsida</taxon>
        <taxon>eudicotyledons</taxon>
        <taxon>Gunneridae</taxon>
        <taxon>Pentapetalae</taxon>
        <taxon>rosids</taxon>
        <taxon>fabids</taxon>
        <taxon>Fabales</taxon>
        <taxon>Fabaceae</taxon>
        <taxon>Papilionoideae</taxon>
        <taxon>50 kb inversion clade</taxon>
        <taxon>NPAAA clade</taxon>
        <taxon>Hologalegina</taxon>
        <taxon>IRL clade</taxon>
        <taxon>Fabeae</taxon>
        <taxon>Lathyrus</taxon>
    </lineage>
</organism>
<evidence type="ECO:0000250" key="1">
    <source>
        <dbReference type="UniProtKB" id="P01055"/>
    </source>
</evidence>
<evidence type="ECO:0000255" key="2"/>
<evidence type="ECO:0000269" key="3">
    <source>
    </source>
</evidence>
<evidence type="ECO:0000303" key="4">
    <source>
    </source>
</evidence>
<evidence type="ECO:0000305" key="5"/>
<reference evidence="5" key="1">
    <citation type="journal article" date="2011" name="Mol. Biosyst.">
        <title>A Bowman-Birk inhibitor with anti-elastase activity from Lathyrus sativus L. seeds.</title>
        <authorList>
            <person name="Rocco M."/>
            <person name="Malorni L."/>
            <person name="Chambery A."/>
            <person name="Poerio E."/>
            <person name="Parente A."/>
            <person name="Di Maro A."/>
        </authorList>
    </citation>
    <scope>PROTEIN SEQUENCE</scope>
    <scope>FUNCTION</scope>
    <scope>MASS SPECTROMETRY</scope>
    <source>
        <tissue evidence="3">Seed</tissue>
    </source>
</reference>
<feature type="chain" id="PRO_0000419010" description="Bowman-Birk type proteinase inhibitor 3">
    <location>
        <begin position="1"/>
        <end position="30" status="greater than"/>
    </location>
</feature>
<feature type="site" description="Reactive bond for trypsin" evidence="1">
    <location>
        <begin position="16"/>
        <end position="17"/>
    </location>
</feature>
<feature type="disulfide bond" evidence="1">
    <location>
        <begin position="8"/>
        <end status="unknown"/>
    </location>
</feature>
<feature type="disulfide bond" evidence="1">
    <location>
        <begin position="9"/>
        <end position="24"/>
    </location>
</feature>
<feature type="disulfide bond" evidence="1">
    <location>
        <begin position="12"/>
        <end status="unknown"/>
    </location>
</feature>
<feature type="disulfide bond" evidence="1">
    <location>
        <begin position="14"/>
        <end position="22"/>
    </location>
</feature>
<feature type="non-terminal residue" evidence="4">
    <location>
        <position position="30"/>
    </location>
</feature>
<name>IBB3_LATSA</name>
<accession>B3EWN7</accession>
<comment type="function">
    <text evidence="3">Inhibits trypsin (IC(50)=4.90 nM) and, to a lesser extent, alpha-chymotrypsin (IC(50)=1.87 uM).</text>
</comment>
<comment type="mass spectrometry"/>
<comment type="similarity">
    <text evidence="2">Belongs to the Bowman-Birk serine protease inhibitor family.</text>
</comment>
<dbReference type="SMR" id="B3EWN7"/>
<dbReference type="GO" id="GO:0005576">
    <property type="term" value="C:extracellular region"/>
    <property type="evidence" value="ECO:0007669"/>
    <property type="project" value="InterPro"/>
</dbReference>
<dbReference type="GO" id="GO:0004867">
    <property type="term" value="F:serine-type endopeptidase inhibitor activity"/>
    <property type="evidence" value="ECO:0000314"/>
    <property type="project" value="UniProtKB"/>
</dbReference>
<dbReference type="GO" id="GO:0010951">
    <property type="term" value="P:negative regulation of endopeptidase activity"/>
    <property type="evidence" value="ECO:0000314"/>
    <property type="project" value="UniProtKB"/>
</dbReference>
<dbReference type="Gene3D" id="2.10.69.10">
    <property type="entry name" value="Cysteine Protease (Bromelain) Inhibitor, subunit H"/>
    <property type="match status" value="1"/>
</dbReference>
<dbReference type="InterPro" id="IPR035995">
    <property type="entry name" value="Bowman-Birk_prot_inh"/>
</dbReference>
<dbReference type="InterPro" id="IPR000877">
    <property type="entry name" value="Prot_inh_BBI"/>
</dbReference>
<dbReference type="Pfam" id="PF00228">
    <property type="entry name" value="Bowman-Birk_leg"/>
    <property type="match status" value="1"/>
</dbReference>
<dbReference type="SUPFAM" id="SSF57247">
    <property type="entry name" value="Bowman-Birk inhibitor, BBI"/>
    <property type="match status" value="1"/>
</dbReference>
<proteinExistence type="evidence at protein level"/>